<feature type="transit peptide" description="Mitochondrion" evidence="4">
    <location>
        <begin position="1"/>
        <end position="31"/>
    </location>
</feature>
<feature type="chain" id="PRO_0000458163" description="CCA tRNA nucleotidyltransferase 1, mitochondrial" evidence="4">
    <location>
        <begin position="32"/>
        <end position="431"/>
    </location>
</feature>
<feature type="binding site" evidence="2">
    <location>
        <position position="61"/>
    </location>
    <ligand>
        <name>ATP</name>
        <dbReference type="ChEBI" id="CHEBI:30616"/>
    </ligand>
</feature>
<feature type="binding site" evidence="2">
    <location>
        <position position="61"/>
    </location>
    <ligand>
        <name>CTP</name>
        <dbReference type="ChEBI" id="CHEBI:37563"/>
    </ligand>
</feature>
<feature type="binding site" evidence="2">
    <location>
        <position position="64"/>
    </location>
    <ligand>
        <name>ATP</name>
        <dbReference type="ChEBI" id="CHEBI:30616"/>
    </ligand>
</feature>
<feature type="binding site" evidence="2">
    <location>
        <position position="64"/>
    </location>
    <ligand>
        <name>CTP</name>
        <dbReference type="ChEBI" id="CHEBI:37563"/>
    </ligand>
</feature>
<feature type="binding site" evidence="1">
    <location>
        <position position="74"/>
    </location>
    <ligand>
        <name>Mg(2+)</name>
        <dbReference type="ChEBI" id="CHEBI:18420"/>
    </ligand>
</feature>
<feature type="binding site" evidence="1">
    <location>
        <position position="76"/>
    </location>
    <ligand>
        <name>Mg(2+)</name>
        <dbReference type="ChEBI" id="CHEBI:18420"/>
    </ligand>
</feature>
<feature type="binding site" evidence="2">
    <location>
        <position position="148"/>
    </location>
    <ligand>
        <name>ATP</name>
        <dbReference type="ChEBI" id="CHEBI:30616"/>
    </ligand>
</feature>
<feature type="binding site" evidence="2">
    <location>
        <position position="148"/>
    </location>
    <ligand>
        <name>CTP</name>
        <dbReference type="ChEBI" id="CHEBI:37563"/>
    </ligand>
</feature>
<feature type="binding site" evidence="2">
    <location>
        <position position="191"/>
    </location>
    <ligand>
        <name>ATP</name>
        <dbReference type="ChEBI" id="CHEBI:30616"/>
    </ligand>
</feature>
<feature type="binding site" evidence="2">
    <location>
        <position position="191"/>
    </location>
    <ligand>
        <name>CTP</name>
        <dbReference type="ChEBI" id="CHEBI:37563"/>
    </ligand>
</feature>
<feature type="binding site" evidence="2">
    <location>
        <position position="194"/>
    </location>
    <ligand>
        <name>ATP</name>
        <dbReference type="ChEBI" id="CHEBI:30616"/>
    </ligand>
</feature>
<feature type="binding site" evidence="2">
    <location>
        <position position="194"/>
    </location>
    <ligand>
        <name>CTP</name>
        <dbReference type="ChEBI" id="CHEBI:37563"/>
    </ligand>
</feature>
<feature type="binding site" evidence="2">
    <location>
        <position position="197"/>
    </location>
    <ligand>
        <name>ATP</name>
        <dbReference type="ChEBI" id="CHEBI:30616"/>
    </ligand>
</feature>
<feature type="binding site" evidence="2">
    <location>
        <position position="197"/>
    </location>
    <ligand>
        <name>CTP</name>
        <dbReference type="ChEBI" id="CHEBI:37563"/>
    </ligand>
</feature>
<feature type="binding site" evidence="2">
    <location>
        <position position="200"/>
    </location>
    <ligand>
        <name>ATP</name>
        <dbReference type="ChEBI" id="CHEBI:30616"/>
    </ligand>
</feature>
<feature type="binding site" evidence="2">
    <location>
        <position position="200"/>
    </location>
    <ligand>
        <name>CTP</name>
        <dbReference type="ChEBI" id="CHEBI:37563"/>
    </ligand>
</feature>
<feature type="site" description="May assist in discriminating ATP from CTP" evidence="2">
    <location>
        <position position="149"/>
    </location>
</feature>
<feature type="site" description="Involved in nucleotide selection" evidence="4">
    <location>
        <position position="190"/>
    </location>
</feature>
<feature type="sequence conflict" description="In Ref. 2; AAH71337." evidence="9" ref="2">
    <original>S</original>
    <variation>T</variation>
    <location>
        <position position="88"/>
    </location>
</feature>
<feature type="sequence conflict" description="In Ref. 2; AAH71337." evidence="9" ref="2">
    <original>N</original>
    <variation>K</variation>
    <location>
        <position position="305"/>
    </location>
</feature>
<feature type="sequence conflict" description="In Ref. 2; AAH71337." evidence="9" ref="2">
    <original>V</original>
    <variation>I</variation>
    <location>
        <position position="331"/>
    </location>
</feature>
<organism>
    <name type="scientific">Danio rerio</name>
    <name type="common">Zebrafish</name>
    <name type="synonym">Brachydanio rerio</name>
    <dbReference type="NCBI Taxonomy" id="7955"/>
    <lineage>
        <taxon>Eukaryota</taxon>
        <taxon>Metazoa</taxon>
        <taxon>Chordata</taxon>
        <taxon>Craniata</taxon>
        <taxon>Vertebrata</taxon>
        <taxon>Euteleostomi</taxon>
        <taxon>Actinopterygii</taxon>
        <taxon>Neopterygii</taxon>
        <taxon>Teleostei</taxon>
        <taxon>Ostariophysi</taxon>
        <taxon>Cypriniformes</taxon>
        <taxon>Danionidae</taxon>
        <taxon>Danioninae</taxon>
        <taxon>Danio</taxon>
    </lineage>
</organism>
<dbReference type="EC" id="2.7.7.72" evidence="3"/>
<dbReference type="EMBL" id="CU468905">
    <property type="status" value="NOT_ANNOTATED_CDS"/>
    <property type="molecule type" value="Genomic_DNA"/>
</dbReference>
<dbReference type="EMBL" id="BC071337">
    <property type="protein sequence ID" value="AAH71337.1"/>
    <property type="status" value="ALT_INIT"/>
    <property type="molecule type" value="mRNA"/>
</dbReference>
<dbReference type="RefSeq" id="NP_001002159.2">
    <property type="nucleotide sequence ID" value="NM_001002159.2"/>
</dbReference>
<dbReference type="RefSeq" id="XP_005166087.1">
    <property type="nucleotide sequence ID" value="XM_005166030.5"/>
</dbReference>
<dbReference type="SMR" id="F6NXI9"/>
<dbReference type="STRING" id="7955.ENSDARP00000097969"/>
<dbReference type="PaxDb" id="7955-ENSDARP00000097969"/>
<dbReference type="Ensembl" id="ENSDART00000113706">
    <property type="protein sequence ID" value="ENSDARP00000097969"/>
    <property type="gene ID" value="ENSDARG00000075297"/>
</dbReference>
<dbReference type="Ensembl" id="ENSDART00000188945">
    <property type="protein sequence ID" value="ENSDARP00000157125"/>
    <property type="gene ID" value="ENSDARG00000075297"/>
</dbReference>
<dbReference type="GeneID" id="415249"/>
<dbReference type="KEGG" id="dre:415249"/>
<dbReference type="AGR" id="ZFIN:ZDB-GENE-040625-176"/>
<dbReference type="CTD" id="51095"/>
<dbReference type="ZFIN" id="ZDB-GENE-040625-176">
    <property type="gene designation" value="trnt1"/>
</dbReference>
<dbReference type="eggNOG" id="KOG2159">
    <property type="taxonomic scope" value="Eukaryota"/>
</dbReference>
<dbReference type="HOGENOM" id="CLU_015961_2_0_1"/>
<dbReference type="OMA" id="NLCPKPM"/>
<dbReference type="OrthoDB" id="445712at2759"/>
<dbReference type="TreeFam" id="TF313253"/>
<dbReference type="PRO" id="PR:F6NXI9"/>
<dbReference type="Proteomes" id="UP000000437">
    <property type="component" value="Alternate scaffold 6"/>
</dbReference>
<dbReference type="Proteomes" id="UP000000437">
    <property type="component" value="Chromosome 6"/>
</dbReference>
<dbReference type="Bgee" id="ENSDARG00000075297">
    <property type="expression patterns" value="Expressed in testis and 20 other cell types or tissues"/>
</dbReference>
<dbReference type="GO" id="GO:0005739">
    <property type="term" value="C:mitochondrion"/>
    <property type="evidence" value="ECO:0000250"/>
    <property type="project" value="UniProtKB"/>
</dbReference>
<dbReference type="GO" id="GO:0005634">
    <property type="term" value="C:nucleus"/>
    <property type="evidence" value="ECO:0000250"/>
    <property type="project" value="UniProtKB"/>
</dbReference>
<dbReference type="GO" id="GO:0005524">
    <property type="term" value="F:ATP binding"/>
    <property type="evidence" value="ECO:0007669"/>
    <property type="project" value="UniProtKB-KW"/>
</dbReference>
<dbReference type="GO" id="GO:0004810">
    <property type="term" value="F:CCA tRNA nucleotidyltransferase activity"/>
    <property type="evidence" value="ECO:0000250"/>
    <property type="project" value="UniProtKB"/>
</dbReference>
<dbReference type="GO" id="GO:0160016">
    <property type="term" value="F:CCACCA tRNA nucleotidyltransferase activity"/>
    <property type="evidence" value="ECO:0000250"/>
    <property type="project" value="UniProtKB"/>
</dbReference>
<dbReference type="GO" id="GO:0046872">
    <property type="term" value="F:metal ion binding"/>
    <property type="evidence" value="ECO:0007669"/>
    <property type="project" value="UniProtKB-KW"/>
</dbReference>
<dbReference type="GO" id="GO:0000049">
    <property type="term" value="F:tRNA binding"/>
    <property type="evidence" value="ECO:0000318"/>
    <property type="project" value="GO_Central"/>
</dbReference>
<dbReference type="GO" id="GO:0001654">
    <property type="term" value="P:eye development"/>
    <property type="evidence" value="ECO:0000315"/>
    <property type="project" value="ZFIN"/>
</dbReference>
<dbReference type="GO" id="GO:1990180">
    <property type="term" value="P:mitochondrial tRNA 3'-end processing"/>
    <property type="evidence" value="ECO:0000318"/>
    <property type="project" value="GO_Central"/>
</dbReference>
<dbReference type="GO" id="GO:0001966">
    <property type="term" value="P:thigmotaxis"/>
    <property type="evidence" value="ECO:0000315"/>
    <property type="project" value="ZFIN"/>
</dbReference>
<dbReference type="GO" id="GO:0001680">
    <property type="term" value="P:tRNA 3'-terminal CCA addition"/>
    <property type="evidence" value="ECO:0000315"/>
    <property type="project" value="UniProtKB"/>
</dbReference>
<dbReference type="GO" id="GO:0008033">
    <property type="term" value="P:tRNA processing"/>
    <property type="evidence" value="ECO:0000315"/>
    <property type="project" value="ZFIN"/>
</dbReference>
<dbReference type="GO" id="GO:0007632">
    <property type="term" value="P:visual behavior"/>
    <property type="evidence" value="ECO:0000315"/>
    <property type="project" value="ZFIN"/>
</dbReference>
<dbReference type="CDD" id="cd05398">
    <property type="entry name" value="NT_ClassII-CCAase"/>
    <property type="match status" value="1"/>
</dbReference>
<dbReference type="FunFam" id="3.30.460.10:FF:000023">
    <property type="entry name" value="CCA tRNA nucleotidyltransferase 1, mitochondrial"/>
    <property type="match status" value="1"/>
</dbReference>
<dbReference type="Gene3D" id="3.30.460.10">
    <property type="entry name" value="Beta Polymerase, domain 2"/>
    <property type="match status" value="1"/>
</dbReference>
<dbReference type="Gene3D" id="1.10.3090.10">
    <property type="entry name" value="cca-adding enzyme, domain 2"/>
    <property type="match status" value="1"/>
</dbReference>
<dbReference type="InterPro" id="IPR050264">
    <property type="entry name" value="Bact_CCA-adding_enz_type3_sf"/>
</dbReference>
<dbReference type="InterPro" id="IPR043519">
    <property type="entry name" value="NT_sf"/>
</dbReference>
<dbReference type="InterPro" id="IPR002646">
    <property type="entry name" value="PolA_pol_head_dom"/>
</dbReference>
<dbReference type="InterPro" id="IPR032828">
    <property type="entry name" value="PolyA_RNA-bd"/>
</dbReference>
<dbReference type="PANTHER" id="PTHR46173">
    <property type="entry name" value="CCA TRNA NUCLEOTIDYLTRANSFERASE 1, MITOCHONDRIAL"/>
    <property type="match status" value="1"/>
</dbReference>
<dbReference type="PANTHER" id="PTHR46173:SF1">
    <property type="entry name" value="CCA TRNA NUCLEOTIDYLTRANSFERASE 1, MITOCHONDRIAL"/>
    <property type="match status" value="1"/>
</dbReference>
<dbReference type="Pfam" id="PF01743">
    <property type="entry name" value="PolyA_pol"/>
    <property type="match status" value="1"/>
</dbReference>
<dbReference type="Pfam" id="PF12627">
    <property type="entry name" value="PolyA_pol_RNAbd"/>
    <property type="match status" value="1"/>
</dbReference>
<dbReference type="SUPFAM" id="SSF81301">
    <property type="entry name" value="Nucleotidyltransferase"/>
    <property type="match status" value="1"/>
</dbReference>
<dbReference type="SUPFAM" id="SSF81891">
    <property type="entry name" value="Poly A polymerase C-terminal region-like"/>
    <property type="match status" value="1"/>
</dbReference>
<sequence length="431" mass="49814">MWAKLFLRPSFVNRVHLTWSCRALLTMQLKTKEFESLFTDGLVGLAEIFQKNQFELRIAGGAVRDLLSGKRPEDVDFATTATPEEMKSMFQTAGVRMINNKGEKHGTITARLHEENFEVTTLRVDVQTDGRHAEVEFTTDWQKDAERRDLTINSMFLGLDGTLYDYFQGYEDLKNRKVRFVGSASLRIQEDYLRILRYFRFYGRVAAEPGQHEPETLEAIRENARGLAGISGERIWVELKKMLVGNHAGHLLELVYELGLAQYTGLPADGDVEEMKQVWQRAHVSSPKPMTVLAALFRKQADVENLDQRLKVSREEKNLGLFLVKYRRDLVKGHDEHDTMKPYTDFITDSREPDTQSKVLELLKYQGENKLLDELRRWSIPRFPVSGHDLRKLGYTSGKEIGTILQELRDMWKKSRYQMSKDELLSTLSQS</sequence>
<proteinExistence type="evidence at transcript level"/>
<name>TRNT1_DANRE</name>
<evidence type="ECO:0000250" key="1">
    <source>
        <dbReference type="UniProtKB" id="O66728"/>
    </source>
</evidence>
<evidence type="ECO:0000250" key="2">
    <source>
        <dbReference type="UniProtKB" id="Q7SIB1"/>
    </source>
</evidence>
<evidence type="ECO:0000250" key="3">
    <source>
        <dbReference type="UniProtKB" id="Q96Q11"/>
    </source>
</evidence>
<evidence type="ECO:0000255" key="4"/>
<evidence type="ECO:0000269" key="5">
    <source>
    </source>
</evidence>
<evidence type="ECO:0000269" key="6">
    <source>
    </source>
</evidence>
<evidence type="ECO:0000303" key="7">
    <source>
    </source>
</evidence>
<evidence type="ECO:0000303" key="8">
    <source ref="2"/>
</evidence>
<evidence type="ECO:0000305" key="9"/>
<protein>
    <recommendedName>
        <fullName evidence="9">CCA tRNA nucleotidyltransferase 1, mitochondrial</fullName>
        <ecNumber evidence="3">2.7.7.72</ecNumber>
    </recommendedName>
</protein>
<comment type="function">
    <text evidence="3 5">Nucleotidyltransferase that catalyzes the addition and repair of the essential 3'-terminal CCA sequence in tRNAs, which is necessary for the attachment of amino acids to the 3' terminus of tRNA molecules, using CTP and ATP as substrates (PubMed:26494905). tRNA 3'-terminal CCA addition is required both for tRNA processing and repair (By similarity). Promotes tRNA repair and recycling downstream of the ribosome-associated quality control (RQC) pathway by mediating addition of the tRNA 3'-terminal CCA following cleavage by ankzf1 and repair by elac1 (By similarity). Also involved in tRNA surveillance by mediating tandem CCA addition to generate a CCACCA at the 3' terminus of unstable tRNAs and tRNA-like transcripts (By similarity). While stable tRNAs receive only 3'-terminal CCA, unstable tRNAs beginning with GG are marked with CCACCA and rapidly degraded (By similarity). The structural flexibility of RNA controls the choice between CCA versus CCACCA addition: following the first CCA addition cycle, nucleotide-binding to the active site triggers a clockwise screw motion, producing torque on the RNA (By similarity). This ejects stable RNAs, whereas unstable RNAs are refolded while bound to the enzyme and subjected to a second CCA catalytic cycle (By similarity).</text>
</comment>
<comment type="catalytic activity">
    <reaction evidence="3">
        <text>a tRNA precursor + 2 CTP + ATP = a tRNA with a 3' CCA end + 3 diphosphate</text>
        <dbReference type="Rhea" id="RHEA:14433"/>
        <dbReference type="Rhea" id="RHEA-COMP:10465"/>
        <dbReference type="Rhea" id="RHEA-COMP:10468"/>
        <dbReference type="ChEBI" id="CHEBI:30616"/>
        <dbReference type="ChEBI" id="CHEBI:33019"/>
        <dbReference type="ChEBI" id="CHEBI:37563"/>
        <dbReference type="ChEBI" id="CHEBI:74896"/>
        <dbReference type="ChEBI" id="CHEBI:83071"/>
        <dbReference type="EC" id="2.7.7.72"/>
    </reaction>
    <physiologicalReaction direction="left-to-right" evidence="3">
        <dbReference type="Rhea" id="RHEA:14434"/>
    </physiologicalReaction>
</comment>
<comment type="catalytic activity">
    <reaction evidence="3">
        <text>a tRNA with a 3' CCA end + 2 CTP + ATP = a tRNA with a 3' CCACCA end + 3 diphosphate</text>
        <dbReference type="Rhea" id="RHEA:76235"/>
        <dbReference type="Rhea" id="RHEA-COMP:10468"/>
        <dbReference type="Rhea" id="RHEA-COMP:18655"/>
        <dbReference type="ChEBI" id="CHEBI:30616"/>
        <dbReference type="ChEBI" id="CHEBI:33019"/>
        <dbReference type="ChEBI" id="CHEBI:37563"/>
        <dbReference type="ChEBI" id="CHEBI:83071"/>
        <dbReference type="ChEBI" id="CHEBI:195187"/>
    </reaction>
    <physiologicalReaction direction="left-to-right" evidence="3">
        <dbReference type="Rhea" id="RHEA:76236"/>
    </physiologicalReaction>
</comment>
<comment type="cofactor">
    <cofactor evidence="1">
        <name>Mg(2+)</name>
        <dbReference type="ChEBI" id="CHEBI:18420"/>
    </cofactor>
</comment>
<comment type="subunit">
    <text evidence="3">Monomer, and homodimer.</text>
</comment>
<comment type="subcellular location">
    <subcellularLocation>
        <location evidence="3">Mitochondrion</location>
    </subcellularLocation>
    <subcellularLocation>
        <location evidence="3">Cytoplasm</location>
    </subcellularLocation>
    <subcellularLocation>
        <location evidence="3">Nucleus</location>
    </subcellularLocation>
</comment>
<comment type="tissue specificity">
    <text evidence="5">Expressed ubiquitously during early embryogenesis.</text>
</comment>
<comment type="developmental stage">
    <text evidence="5">Expressed from early embryogenesis (PubMed:26494905). By 2 days post-fertilization (dpf), enriched in the brain, cardiovascular region, pectoral fin buds and in proliferative cells of the retina (PubMed:26494905). At 3 dpf, expression is maintained in the brain, retina and cardiac regions (PubMed:26494905). By 5 dpf, expression is observed in the head and trunk neuromasts (PubMed:26494905).</text>
</comment>
<comment type="disruption phenotype">
    <text evidence="6">Fishes develop normally for the first 4 days as they can rely on maternal transcripts present in the fertilised egg, but they all die of multisystem defects by nine days post-fertilization (dpf).</text>
</comment>
<comment type="similarity">
    <text evidence="9">Belongs to the tRNA nucleotidyltransferase/poly(A) polymerase family.</text>
</comment>
<comment type="sequence caution" evidence="9">
    <conflict type="erroneous initiation">
        <sequence resource="EMBL-CDS" id="AAH71337"/>
    </conflict>
    <text>Truncated N-terminus.</text>
</comment>
<keyword id="KW-0067">ATP-binding</keyword>
<keyword id="KW-0963">Cytoplasm</keyword>
<keyword id="KW-0460">Magnesium</keyword>
<keyword id="KW-0479">Metal-binding</keyword>
<keyword id="KW-0496">Mitochondrion</keyword>
<keyword id="KW-0547">Nucleotide-binding</keyword>
<keyword id="KW-0548">Nucleotidyltransferase</keyword>
<keyword id="KW-0539">Nucleus</keyword>
<keyword id="KW-1185">Reference proteome</keyword>
<keyword id="KW-0808">Transferase</keyword>
<keyword id="KW-0809">Transit peptide</keyword>
<keyword id="KW-0819">tRNA processing</keyword>
<gene>
    <name evidence="7" type="primary">trnt1</name>
    <name evidence="8" type="ordered locus">zgc:86645</name>
</gene>
<reference key="1">
    <citation type="journal article" date="2013" name="Nature">
        <title>The zebrafish reference genome sequence and its relationship to the human genome.</title>
        <authorList>
            <person name="Howe K."/>
            <person name="Clark M.D."/>
            <person name="Torroja C.F."/>
            <person name="Torrance J."/>
            <person name="Berthelot C."/>
            <person name="Muffato M."/>
            <person name="Collins J.E."/>
            <person name="Humphray S."/>
            <person name="McLaren K."/>
            <person name="Matthews L."/>
            <person name="McLaren S."/>
            <person name="Sealy I."/>
            <person name="Caccamo M."/>
            <person name="Churcher C."/>
            <person name="Scott C."/>
            <person name="Barrett J.C."/>
            <person name="Koch R."/>
            <person name="Rauch G.J."/>
            <person name="White S."/>
            <person name="Chow W."/>
            <person name="Kilian B."/>
            <person name="Quintais L.T."/>
            <person name="Guerra-Assuncao J.A."/>
            <person name="Zhou Y."/>
            <person name="Gu Y."/>
            <person name="Yen J."/>
            <person name="Vogel J.H."/>
            <person name="Eyre T."/>
            <person name="Redmond S."/>
            <person name="Banerjee R."/>
            <person name="Chi J."/>
            <person name="Fu B."/>
            <person name="Langley E."/>
            <person name="Maguire S.F."/>
            <person name="Laird G.K."/>
            <person name="Lloyd D."/>
            <person name="Kenyon E."/>
            <person name="Donaldson S."/>
            <person name="Sehra H."/>
            <person name="Almeida-King J."/>
            <person name="Loveland J."/>
            <person name="Trevanion S."/>
            <person name="Jones M."/>
            <person name="Quail M."/>
            <person name="Willey D."/>
            <person name="Hunt A."/>
            <person name="Burton J."/>
            <person name="Sims S."/>
            <person name="McLay K."/>
            <person name="Plumb B."/>
            <person name="Davis J."/>
            <person name="Clee C."/>
            <person name="Oliver K."/>
            <person name="Clark R."/>
            <person name="Riddle C."/>
            <person name="Elliot D."/>
            <person name="Threadgold G."/>
            <person name="Harden G."/>
            <person name="Ware D."/>
            <person name="Begum S."/>
            <person name="Mortimore B."/>
            <person name="Kerry G."/>
            <person name="Heath P."/>
            <person name="Phillimore B."/>
            <person name="Tracey A."/>
            <person name="Corby N."/>
            <person name="Dunn M."/>
            <person name="Johnson C."/>
            <person name="Wood J."/>
            <person name="Clark S."/>
            <person name="Pelan S."/>
            <person name="Griffiths G."/>
            <person name="Smith M."/>
            <person name="Glithero R."/>
            <person name="Howden P."/>
            <person name="Barker N."/>
            <person name="Lloyd C."/>
            <person name="Stevens C."/>
            <person name="Harley J."/>
            <person name="Holt K."/>
            <person name="Panagiotidis G."/>
            <person name="Lovell J."/>
            <person name="Beasley H."/>
            <person name="Henderson C."/>
            <person name="Gordon D."/>
            <person name="Auger K."/>
            <person name="Wright D."/>
            <person name="Collins J."/>
            <person name="Raisen C."/>
            <person name="Dyer L."/>
            <person name="Leung K."/>
            <person name="Robertson L."/>
            <person name="Ambridge K."/>
            <person name="Leongamornlert D."/>
            <person name="McGuire S."/>
            <person name="Gilderthorp R."/>
            <person name="Griffiths C."/>
            <person name="Manthravadi D."/>
            <person name="Nichol S."/>
            <person name="Barker G."/>
            <person name="Whitehead S."/>
            <person name="Kay M."/>
            <person name="Brown J."/>
            <person name="Murnane C."/>
            <person name="Gray E."/>
            <person name="Humphries M."/>
            <person name="Sycamore N."/>
            <person name="Barker D."/>
            <person name="Saunders D."/>
            <person name="Wallis J."/>
            <person name="Babbage A."/>
            <person name="Hammond S."/>
            <person name="Mashreghi-Mohammadi M."/>
            <person name="Barr L."/>
            <person name="Martin S."/>
            <person name="Wray P."/>
            <person name="Ellington A."/>
            <person name="Matthews N."/>
            <person name="Ellwood M."/>
            <person name="Woodmansey R."/>
            <person name="Clark G."/>
            <person name="Cooper J."/>
            <person name="Tromans A."/>
            <person name="Grafham D."/>
            <person name="Skuce C."/>
            <person name="Pandian R."/>
            <person name="Andrews R."/>
            <person name="Harrison E."/>
            <person name="Kimberley A."/>
            <person name="Garnett J."/>
            <person name="Fosker N."/>
            <person name="Hall R."/>
            <person name="Garner P."/>
            <person name="Kelly D."/>
            <person name="Bird C."/>
            <person name="Palmer S."/>
            <person name="Gehring I."/>
            <person name="Berger A."/>
            <person name="Dooley C.M."/>
            <person name="Ersan-Urun Z."/>
            <person name="Eser C."/>
            <person name="Geiger H."/>
            <person name="Geisler M."/>
            <person name="Karotki L."/>
            <person name="Kirn A."/>
            <person name="Konantz J."/>
            <person name="Konantz M."/>
            <person name="Oberlander M."/>
            <person name="Rudolph-Geiger S."/>
            <person name="Teucke M."/>
            <person name="Lanz C."/>
            <person name="Raddatz G."/>
            <person name="Osoegawa K."/>
            <person name="Zhu B."/>
            <person name="Rapp A."/>
            <person name="Widaa S."/>
            <person name="Langford C."/>
            <person name="Yang F."/>
            <person name="Schuster S.C."/>
            <person name="Carter N.P."/>
            <person name="Harrow J."/>
            <person name="Ning Z."/>
            <person name="Herrero J."/>
            <person name="Searle S.M."/>
            <person name="Enright A."/>
            <person name="Geisler R."/>
            <person name="Plasterk R.H."/>
            <person name="Lee C."/>
            <person name="Westerfield M."/>
            <person name="de Jong P.J."/>
            <person name="Zon L.I."/>
            <person name="Postlethwait J.H."/>
            <person name="Nusslein-Volhard C."/>
            <person name="Hubbard T.J."/>
            <person name="Roest Crollius H."/>
            <person name="Rogers J."/>
            <person name="Stemple D.L."/>
        </authorList>
    </citation>
    <scope>NUCLEOTIDE SEQUENCE [LARGE SCALE GENOMIC DNA]</scope>
    <source>
        <strain>Tuebingen</strain>
    </source>
</reference>
<reference key="2">
    <citation type="submission" date="2004-06" db="EMBL/GenBank/DDBJ databases">
        <authorList>
            <consortium name="NIH - Zebrafish Gene Collection (ZGC) project"/>
        </authorList>
    </citation>
    <scope>NUCLEOTIDE SEQUENCE [LARGE SCALE MRNA]</scope>
    <source>
        <tissue>Embryo</tissue>
    </source>
</reference>
<reference key="3">
    <citation type="journal article" date="2016" name="Hum. Mol. Genet.">
        <title>Hypomorphic mutations in TRNT1 cause retinitis pigmentosa with erythrocytic microcytosis.</title>
        <authorList>
            <person name="DeLuca A.P."/>
            <person name="Whitmore S.S."/>
            <person name="Barnes J."/>
            <person name="Sharma T.P."/>
            <person name="Westfall T.A."/>
            <person name="Scott C.A."/>
            <person name="Weed M.C."/>
            <person name="Wiley J.S."/>
            <person name="Wiley L.A."/>
            <person name="Johnston R.M."/>
            <person name="Schnieders M.J."/>
            <person name="Lentz S.R."/>
            <person name="Tucker B.A."/>
            <person name="Mullins R.F."/>
            <person name="Scheetz T.E."/>
            <person name="Stone E.M."/>
            <person name="Slusarski D.C."/>
        </authorList>
    </citation>
    <scope>FUNCTION</scope>
    <scope>TISSUE SPECIFICITY</scope>
    <scope>DEVELOPMENTAL STAGE</scope>
</reference>
<reference key="4">
    <citation type="journal article" date="2018" name="Ann. Rheum. Dis.">
        <title>Aberrant tRNA processing causes an autoinflammatory syndrome responsive to TNF inhibitors.</title>
        <authorList>
            <person name="Giannelou A."/>
            <person name="Wang H."/>
            <person name="Zhou Q."/>
            <person name="Park Y.H."/>
            <person name="Abu-Asab M.S."/>
            <person name="Ylaya K."/>
            <person name="Stone D.L."/>
            <person name="Sediva A."/>
            <person name="Sleiman R."/>
            <person name="Sramkova L."/>
            <person name="Bhatla D."/>
            <person name="Serti E."/>
            <person name="Tsai W.L."/>
            <person name="Yang D."/>
            <person name="Bishop K."/>
            <person name="Carrington B."/>
            <person name="Pei W."/>
            <person name="Deuitch N."/>
            <person name="Brooks S."/>
            <person name="Edwan J.H."/>
            <person name="Joshi S."/>
            <person name="Prader S."/>
            <person name="Kaiser D."/>
            <person name="Owen W.C."/>
            <person name="Sonbul A.A."/>
            <person name="Zhang Y."/>
            <person name="Niemela J.E."/>
            <person name="Burgess S.M."/>
            <person name="Boehm M."/>
            <person name="Rehermann B."/>
            <person name="Chae J."/>
            <person name="Quezado M.M."/>
            <person name="Ombrello A.K."/>
            <person name="Buckley R.H."/>
            <person name="Grom A.A."/>
            <person name="Remmers E.F."/>
            <person name="Pachlopnik J.M."/>
            <person name="Su H.C."/>
            <person name="Gutierrez-Cruz G."/>
            <person name="Hewitt S.M."/>
            <person name="Sood R."/>
            <person name="Risma K."/>
            <person name="Calvo K.R."/>
            <person name="Rosenzweig S.D."/>
            <person name="Gadina M."/>
            <person name="Hafner M."/>
            <person name="Sun H.W."/>
            <person name="Kastner D.L."/>
            <person name="Aksentijevich I."/>
        </authorList>
    </citation>
    <scope>DISRUPTION PHENOTYPE</scope>
</reference>
<accession>F6NXI9</accession>
<accession>A0A8M2BDE0</accession>
<accession>Q6IQR7</accession>